<keyword id="KW-0496">Mitochondrion</keyword>
<keyword id="KW-1185">Reference proteome</keyword>
<keyword id="KW-0677">Repeat</keyword>
<keyword id="KW-0809">Transit peptide</keyword>
<organism>
    <name type="scientific">Arabidopsis thaliana</name>
    <name type="common">Mouse-ear cress</name>
    <dbReference type="NCBI Taxonomy" id="3702"/>
    <lineage>
        <taxon>Eukaryota</taxon>
        <taxon>Viridiplantae</taxon>
        <taxon>Streptophyta</taxon>
        <taxon>Embryophyta</taxon>
        <taxon>Tracheophyta</taxon>
        <taxon>Spermatophyta</taxon>
        <taxon>Magnoliopsida</taxon>
        <taxon>eudicotyledons</taxon>
        <taxon>Gunneridae</taxon>
        <taxon>Pentapetalae</taxon>
        <taxon>rosids</taxon>
        <taxon>malvids</taxon>
        <taxon>Brassicales</taxon>
        <taxon>Brassicaceae</taxon>
        <taxon>Camelineae</taxon>
        <taxon>Arabidopsis</taxon>
    </lineage>
</organism>
<reference key="1">
    <citation type="journal article" date="2000" name="Nature">
        <title>Sequence and analysis of chromosome 5 of the plant Arabidopsis thaliana.</title>
        <authorList>
            <person name="Tabata S."/>
            <person name="Kaneko T."/>
            <person name="Nakamura Y."/>
            <person name="Kotani H."/>
            <person name="Kato T."/>
            <person name="Asamizu E."/>
            <person name="Miyajima N."/>
            <person name="Sasamoto S."/>
            <person name="Kimura T."/>
            <person name="Hosouchi T."/>
            <person name="Kawashima K."/>
            <person name="Kohara M."/>
            <person name="Matsumoto M."/>
            <person name="Matsuno A."/>
            <person name="Muraki A."/>
            <person name="Nakayama S."/>
            <person name="Nakazaki N."/>
            <person name="Naruo K."/>
            <person name="Okumura S."/>
            <person name="Shinpo S."/>
            <person name="Takeuchi C."/>
            <person name="Wada T."/>
            <person name="Watanabe A."/>
            <person name="Yamada M."/>
            <person name="Yasuda M."/>
            <person name="Sato S."/>
            <person name="de la Bastide M."/>
            <person name="Huang E."/>
            <person name="Spiegel L."/>
            <person name="Gnoj L."/>
            <person name="O'Shaughnessy A."/>
            <person name="Preston R."/>
            <person name="Habermann K."/>
            <person name="Murray J."/>
            <person name="Johnson D."/>
            <person name="Rohlfing T."/>
            <person name="Nelson J."/>
            <person name="Stoneking T."/>
            <person name="Pepin K."/>
            <person name="Spieth J."/>
            <person name="Sekhon M."/>
            <person name="Armstrong J."/>
            <person name="Becker M."/>
            <person name="Belter E."/>
            <person name="Cordum H."/>
            <person name="Cordes M."/>
            <person name="Courtney L."/>
            <person name="Courtney W."/>
            <person name="Dante M."/>
            <person name="Du H."/>
            <person name="Edwards J."/>
            <person name="Fryman J."/>
            <person name="Haakensen B."/>
            <person name="Lamar E."/>
            <person name="Latreille P."/>
            <person name="Leonard S."/>
            <person name="Meyer R."/>
            <person name="Mulvaney E."/>
            <person name="Ozersky P."/>
            <person name="Riley A."/>
            <person name="Strowmatt C."/>
            <person name="Wagner-McPherson C."/>
            <person name="Wollam A."/>
            <person name="Yoakum M."/>
            <person name="Bell M."/>
            <person name="Dedhia N."/>
            <person name="Parnell L."/>
            <person name="Shah R."/>
            <person name="Rodriguez M."/>
            <person name="Hoon See L."/>
            <person name="Vil D."/>
            <person name="Baker J."/>
            <person name="Kirchoff K."/>
            <person name="Toth K."/>
            <person name="King L."/>
            <person name="Bahret A."/>
            <person name="Miller B."/>
            <person name="Marra M.A."/>
            <person name="Martienssen R."/>
            <person name="McCombie W.R."/>
            <person name="Wilson R.K."/>
            <person name="Murphy G."/>
            <person name="Bancroft I."/>
            <person name="Volckaert G."/>
            <person name="Wambutt R."/>
            <person name="Duesterhoeft A."/>
            <person name="Stiekema W."/>
            <person name="Pohl T."/>
            <person name="Entian K.-D."/>
            <person name="Terryn N."/>
            <person name="Hartley N."/>
            <person name="Bent E."/>
            <person name="Johnson S."/>
            <person name="Langham S.-A."/>
            <person name="McCullagh B."/>
            <person name="Robben J."/>
            <person name="Grymonprez B."/>
            <person name="Zimmermann W."/>
            <person name="Ramsperger U."/>
            <person name="Wedler H."/>
            <person name="Balke K."/>
            <person name="Wedler E."/>
            <person name="Peters S."/>
            <person name="van Staveren M."/>
            <person name="Dirkse W."/>
            <person name="Mooijman P."/>
            <person name="Klein Lankhorst R."/>
            <person name="Weitzenegger T."/>
            <person name="Bothe G."/>
            <person name="Rose M."/>
            <person name="Hauf J."/>
            <person name="Berneiser S."/>
            <person name="Hempel S."/>
            <person name="Feldpausch M."/>
            <person name="Lamberth S."/>
            <person name="Villarroel R."/>
            <person name="Gielen J."/>
            <person name="Ardiles W."/>
            <person name="Bents O."/>
            <person name="Lemcke K."/>
            <person name="Kolesov G."/>
            <person name="Mayer K.F.X."/>
            <person name="Rudd S."/>
            <person name="Schoof H."/>
            <person name="Schueller C."/>
            <person name="Zaccaria P."/>
            <person name="Mewes H.-W."/>
            <person name="Bevan M."/>
            <person name="Fransz P.F."/>
        </authorList>
    </citation>
    <scope>NUCLEOTIDE SEQUENCE [LARGE SCALE GENOMIC DNA]</scope>
    <source>
        <strain>cv. Columbia</strain>
    </source>
</reference>
<reference key="2">
    <citation type="journal article" date="2017" name="Plant J.">
        <title>Araport11: a complete reannotation of the Arabidopsis thaliana reference genome.</title>
        <authorList>
            <person name="Cheng C.Y."/>
            <person name="Krishnakumar V."/>
            <person name="Chan A.P."/>
            <person name="Thibaud-Nissen F."/>
            <person name="Schobel S."/>
            <person name="Town C.D."/>
        </authorList>
    </citation>
    <scope>GENOME REANNOTATION</scope>
    <source>
        <strain>cv. Columbia</strain>
    </source>
</reference>
<reference key="3">
    <citation type="journal article" date="2004" name="Plant Cell">
        <title>Genome-wide analysis of Arabidopsis pentatricopeptide repeat proteins reveals their essential role in organelle biogenesis.</title>
        <authorList>
            <person name="Lurin C."/>
            <person name="Andres C."/>
            <person name="Aubourg S."/>
            <person name="Bellaoui M."/>
            <person name="Bitton F."/>
            <person name="Bruyere C."/>
            <person name="Caboche M."/>
            <person name="Debast C."/>
            <person name="Gualberto J."/>
            <person name="Hoffmann B."/>
            <person name="Lecharny A."/>
            <person name="Le Ret M."/>
            <person name="Martin-Magniette M.-L."/>
            <person name="Mireau H."/>
            <person name="Peeters N."/>
            <person name="Renou J.-P."/>
            <person name="Szurek B."/>
            <person name="Taconnat L."/>
            <person name="Small I."/>
        </authorList>
    </citation>
    <scope>GENE FAMILY</scope>
</reference>
<proteinExistence type="evidence at transcript level"/>
<comment type="subcellular location">
    <subcellularLocation>
        <location evidence="2">Mitochondrion</location>
    </subcellularLocation>
</comment>
<comment type="similarity">
    <text evidence="2">Belongs to the PPR family. PCMP-E subfamily.</text>
</comment>
<comment type="online information" name="Pentatricopeptide repeat proteins">
    <link uri="https://ppr.plantenergy.uwa.edu.au"/>
</comment>
<dbReference type="EMBL" id="AC068809">
    <property type="status" value="NOT_ANNOTATED_CDS"/>
    <property type="molecule type" value="Genomic_DNA"/>
</dbReference>
<dbReference type="EMBL" id="CP002688">
    <property type="protein sequence ID" value="AED92640.1"/>
    <property type="molecule type" value="Genomic_DNA"/>
</dbReference>
<dbReference type="SMR" id="P0C8Q8"/>
<dbReference type="FunCoup" id="P0C8Q8">
    <property type="interactions" value="715"/>
</dbReference>
<dbReference type="STRING" id="3702.P0C8Q8"/>
<dbReference type="PaxDb" id="3702-AT5G19020.1"/>
<dbReference type="ProteomicsDB" id="249275"/>
<dbReference type="EnsemblPlants" id="AT5G19020.1">
    <property type="protein sequence ID" value="AT5G19020.1"/>
    <property type="gene ID" value="AT5G19020"/>
</dbReference>
<dbReference type="GeneID" id="832021"/>
<dbReference type="Gramene" id="AT5G19020.1">
    <property type="protein sequence ID" value="AT5G19020.1"/>
    <property type="gene ID" value="AT5G19020"/>
</dbReference>
<dbReference type="KEGG" id="ath:AT5G19020"/>
<dbReference type="Araport" id="AT5G19020"/>
<dbReference type="TAIR" id="AT5G19020">
    <property type="gene designation" value="MEF18"/>
</dbReference>
<dbReference type="eggNOG" id="KOG4197">
    <property type="taxonomic scope" value="Eukaryota"/>
</dbReference>
<dbReference type="HOGENOM" id="CLU_002706_0_1_1"/>
<dbReference type="InParanoid" id="P0C8Q8"/>
<dbReference type="OMA" id="RWAHEYV"/>
<dbReference type="OrthoDB" id="601293at2759"/>
<dbReference type="PhylomeDB" id="P0C8Q8"/>
<dbReference type="PRO" id="PR:P0C8Q8"/>
<dbReference type="Proteomes" id="UP000006548">
    <property type="component" value="Chromosome 5"/>
</dbReference>
<dbReference type="ExpressionAtlas" id="P0C8Q8">
    <property type="expression patterns" value="baseline and differential"/>
</dbReference>
<dbReference type="GO" id="GO:0005739">
    <property type="term" value="C:mitochondrion"/>
    <property type="evidence" value="ECO:0007669"/>
    <property type="project" value="UniProtKB-SubCell"/>
</dbReference>
<dbReference type="GO" id="GO:0003723">
    <property type="term" value="F:RNA binding"/>
    <property type="evidence" value="ECO:0007669"/>
    <property type="project" value="InterPro"/>
</dbReference>
<dbReference type="GO" id="GO:0080156">
    <property type="term" value="P:mitochondrial mRNA modification"/>
    <property type="evidence" value="ECO:0000315"/>
    <property type="project" value="TAIR"/>
</dbReference>
<dbReference type="FunFam" id="1.25.40.10:FF:000212">
    <property type="entry name" value="Pentatricopeptide repeat-containing protein At2g03380, mitochondrial"/>
    <property type="match status" value="1"/>
</dbReference>
<dbReference type="FunFam" id="1.25.40.10:FF:000596">
    <property type="entry name" value="Pentatricopeptide repeat-containing protein, mitochondrial"/>
    <property type="match status" value="1"/>
</dbReference>
<dbReference type="FunFam" id="1.25.40.10:FF:001083">
    <property type="entry name" value="Pentatricopeptide repeat-containing protein, mitochondrial"/>
    <property type="match status" value="1"/>
</dbReference>
<dbReference type="Gene3D" id="1.25.40.10">
    <property type="entry name" value="Tetratricopeptide repeat domain"/>
    <property type="match status" value="5"/>
</dbReference>
<dbReference type="InterPro" id="IPR046848">
    <property type="entry name" value="E_motif"/>
</dbReference>
<dbReference type="InterPro" id="IPR002885">
    <property type="entry name" value="Pentatricopeptide_rpt"/>
</dbReference>
<dbReference type="InterPro" id="IPR046960">
    <property type="entry name" value="PPR_At4g14850-like_plant"/>
</dbReference>
<dbReference type="InterPro" id="IPR011990">
    <property type="entry name" value="TPR-like_helical_dom_sf"/>
</dbReference>
<dbReference type="NCBIfam" id="TIGR00756">
    <property type="entry name" value="PPR"/>
    <property type="match status" value="8"/>
</dbReference>
<dbReference type="PANTHER" id="PTHR47926:SF407">
    <property type="entry name" value="(WILD MALAYSIAN BANANA) HYPOTHETICAL PROTEIN"/>
    <property type="match status" value="1"/>
</dbReference>
<dbReference type="PANTHER" id="PTHR47926">
    <property type="entry name" value="PENTATRICOPEPTIDE REPEAT-CONTAINING PROTEIN"/>
    <property type="match status" value="1"/>
</dbReference>
<dbReference type="Pfam" id="PF20431">
    <property type="entry name" value="E_motif"/>
    <property type="match status" value="1"/>
</dbReference>
<dbReference type="Pfam" id="PF01535">
    <property type="entry name" value="PPR"/>
    <property type="match status" value="6"/>
</dbReference>
<dbReference type="Pfam" id="PF12854">
    <property type="entry name" value="PPR_1"/>
    <property type="match status" value="1"/>
</dbReference>
<dbReference type="Pfam" id="PF13041">
    <property type="entry name" value="PPR_2"/>
    <property type="match status" value="3"/>
</dbReference>
<dbReference type="PROSITE" id="PS51375">
    <property type="entry name" value="PPR"/>
    <property type="match status" value="14"/>
</dbReference>
<name>PP394_ARATH</name>
<gene>
    <name type="primary">PCMP-E42</name>
    <name type="ordered locus">At5g19020</name>
    <name type="ORF">T16G12_60</name>
</gene>
<evidence type="ECO:0000255" key="1"/>
<evidence type="ECO:0000305" key="2"/>
<accession>P0C8Q8</accession>
<accession>Q3E9D2</accession>
<sequence>MIKLIRFFRSRRCWVISLQARCFSAPSRTHFDFSGESSDTERALVSALGSCASSNDVTCGRQIHCRVLKSGLDSNGYICNSVLNMYAKCRLLADAESVFRDHAKLDSASFNIMVDGYVRSRRLWDALKLFDVMPERSCVSYTTLIKGYAQNNQWSEAMELFREMRNLGIMLNEVTLATVISACSHLGGIWDCRMLQSLAIKLKLEGRVFVSTNLLHMYCLCLCLKDARKLFDEMPERNLVTWNVMLNGYSKAGLIEQAEELFDQITEKDIVSWGTMIDGCLRKNQLDEALVYYTEMLRCGMKPSEVMMVDLLSASARSVGSSKGLQLHGTIVKRGFDCYDFLQATIIHFYAVSNDIKLALQQFEASVKDHIASRNALIAGFVKNGMVEQAREVFDQTHDKDIFSWNAMISGYAQSLSPQLALHLFREMISSSQVKPDAITMVSVFSAISSLGSLEEGKRAHDYLNFSTIPPNDNLTAAIIDMYAKCGSIETALNIFHQTKNISSSTISPWNAIICGSATHGHAKLALDLYSDLQSLPIKPNSITFVGVLSACCHAGLVELGKTYFESMKSDHGIEPDIKHYGCMVDLLGKAGRLEEAKEMIKKMPVKADVMIWGMLLSASRTHGNVEIAELAATELAAIDPSHGGCKVMLSNVYADAGRWEDVALVREEMRTRDVEWSRAFSGVV</sequence>
<protein>
    <recommendedName>
        <fullName>Pentatricopeptide repeat-containing protein At5g19020, mitochondrial</fullName>
    </recommendedName>
</protein>
<feature type="transit peptide" description="Mitochondrion" evidence="1">
    <location>
        <begin position="1"/>
        <end position="23"/>
    </location>
</feature>
<feature type="chain" id="PRO_0000363531" description="Pentatricopeptide repeat-containing protein At5g19020, mitochondrial">
    <location>
        <begin position="24"/>
        <end position="685"/>
    </location>
</feature>
<feature type="repeat" description="PPR 1">
    <location>
        <begin position="40"/>
        <end position="74"/>
    </location>
</feature>
<feature type="repeat" description="PPR 2">
    <location>
        <begin position="75"/>
        <end position="105"/>
    </location>
</feature>
<feature type="repeat" description="PPR 3">
    <location>
        <begin position="106"/>
        <end position="136"/>
    </location>
</feature>
<feature type="repeat" description="PPR 4">
    <location>
        <begin position="137"/>
        <end position="171"/>
    </location>
</feature>
<feature type="repeat" description="PPR 5">
    <location>
        <begin position="172"/>
        <end position="206"/>
    </location>
</feature>
<feature type="repeat" description="PPR 6">
    <location>
        <begin position="207"/>
        <end position="237"/>
    </location>
</feature>
<feature type="repeat" description="PPR 7">
    <location>
        <begin position="238"/>
        <end position="268"/>
    </location>
</feature>
<feature type="repeat" description="PPR 8">
    <location>
        <begin position="269"/>
        <end position="303"/>
    </location>
</feature>
<feature type="repeat" description="PPR 9">
    <location>
        <begin position="304"/>
        <end position="338"/>
    </location>
</feature>
<feature type="repeat" description="PPR 10">
    <location>
        <begin position="339"/>
        <end position="369"/>
    </location>
</feature>
<feature type="repeat" description="PPR 11">
    <location>
        <begin position="370"/>
        <end position="400"/>
    </location>
</feature>
<feature type="repeat" description="PPR 12">
    <location>
        <begin position="401"/>
        <end position="435"/>
    </location>
</feature>
<feature type="repeat" description="PPR 13">
    <location>
        <begin position="437"/>
        <end position="471"/>
    </location>
</feature>
<feature type="repeat" description="PPR 14">
    <location>
        <begin position="472"/>
        <end position="502"/>
    </location>
</feature>
<feature type="repeat" description="PPR 15">
    <location>
        <begin position="506"/>
        <end position="540"/>
    </location>
</feature>
<feature type="repeat" description="PPR 16">
    <location>
        <begin position="541"/>
        <end position="576"/>
    </location>
</feature>
<feature type="repeat" description="PPR 17">
    <location>
        <begin position="577"/>
        <end position="607"/>
    </location>
</feature>
<feature type="region of interest" description="Type E motif; degenerate">
    <location>
        <begin position="612"/>
        <end position="685"/>
    </location>
</feature>